<accession>A1E9S1</accession>
<geneLocation type="chloroplast"/>
<comment type="function">
    <text evidence="1">Produces ATP from ADP in the presence of a proton gradient across the membrane. The alpha chain is a regulatory subunit.</text>
</comment>
<comment type="catalytic activity">
    <reaction evidence="1">
        <text>ATP + H2O + 4 H(+)(in) = ADP + phosphate + 5 H(+)(out)</text>
        <dbReference type="Rhea" id="RHEA:57720"/>
        <dbReference type="ChEBI" id="CHEBI:15377"/>
        <dbReference type="ChEBI" id="CHEBI:15378"/>
        <dbReference type="ChEBI" id="CHEBI:30616"/>
        <dbReference type="ChEBI" id="CHEBI:43474"/>
        <dbReference type="ChEBI" id="CHEBI:456216"/>
        <dbReference type="EC" id="7.1.2.2"/>
    </reaction>
</comment>
<comment type="subunit">
    <text evidence="1">F-type ATPases have 2 components, CF(1) - the catalytic core - and CF(0) - the membrane proton channel. CF(1) has five subunits: alpha(3), beta(3), gamma(1), delta(1), epsilon(1). CF(0) has four main subunits: a, b, b' and c.</text>
</comment>
<comment type="subcellular location">
    <subcellularLocation>
        <location evidence="1">Plastid</location>
        <location evidence="1">Chloroplast thylakoid membrane</location>
        <topology evidence="1">Peripheral membrane protein</topology>
    </subcellularLocation>
</comment>
<comment type="similarity">
    <text evidence="1">Belongs to the ATPase alpha/beta chains family.</text>
</comment>
<keyword id="KW-0066">ATP synthesis</keyword>
<keyword id="KW-0067">ATP-binding</keyword>
<keyword id="KW-0139">CF(1)</keyword>
<keyword id="KW-0150">Chloroplast</keyword>
<keyword id="KW-0375">Hydrogen ion transport</keyword>
<keyword id="KW-0406">Ion transport</keyword>
<keyword id="KW-0472">Membrane</keyword>
<keyword id="KW-0547">Nucleotide-binding</keyword>
<keyword id="KW-0934">Plastid</keyword>
<keyword id="KW-1185">Reference proteome</keyword>
<keyword id="KW-0793">Thylakoid</keyword>
<keyword id="KW-1278">Translocase</keyword>
<keyword id="KW-0813">Transport</keyword>
<protein>
    <recommendedName>
        <fullName evidence="1">ATP synthase subunit alpha, chloroplastic</fullName>
        <ecNumber evidence="1">7.1.2.2</ecNumber>
    </recommendedName>
    <alternativeName>
        <fullName evidence="1">ATP synthase F1 sector subunit alpha</fullName>
    </alternativeName>
    <alternativeName>
        <fullName evidence="1">F-ATPase subunit alpha</fullName>
    </alternativeName>
</protein>
<dbReference type="EC" id="7.1.2.2" evidence="1"/>
<dbReference type="EMBL" id="EF115542">
    <property type="protein sequence ID" value="ABK79493.1"/>
    <property type="molecule type" value="Genomic_DNA"/>
</dbReference>
<dbReference type="RefSeq" id="YP_899404.1">
    <property type="nucleotide sequence ID" value="NC_008602.1"/>
</dbReference>
<dbReference type="SMR" id="A1E9S1"/>
<dbReference type="FunCoup" id="A1E9S1">
    <property type="interactions" value="284"/>
</dbReference>
<dbReference type="STRING" id="4558.A1E9S1"/>
<dbReference type="GeneID" id="4549115"/>
<dbReference type="KEGG" id="sbi:4549115"/>
<dbReference type="InParanoid" id="A1E9S1"/>
<dbReference type="OrthoDB" id="751331at2759"/>
<dbReference type="Proteomes" id="UP000000768">
    <property type="component" value="Chloroplast"/>
</dbReference>
<dbReference type="ExpressionAtlas" id="A1E9S1">
    <property type="expression patterns" value="baseline and differential"/>
</dbReference>
<dbReference type="GO" id="GO:0009535">
    <property type="term" value="C:chloroplast thylakoid membrane"/>
    <property type="evidence" value="ECO:0007669"/>
    <property type="project" value="UniProtKB-SubCell"/>
</dbReference>
<dbReference type="GO" id="GO:0045259">
    <property type="term" value="C:proton-transporting ATP synthase complex"/>
    <property type="evidence" value="ECO:0007669"/>
    <property type="project" value="UniProtKB-KW"/>
</dbReference>
<dbReference type="GO" id="GO:0043531">
    <property type="term" value="F:ADP binding"/>
    <property type="evidence" value="ECO:0000318"/>
    <property type="project" value="GO_Central"/>
</dbReference>
<dbReference type="GO" id="GO:0005524">
    <property type="term" value="F:ATP binding"/>
    <property type="evidence" value="ECO:0000318"/>
    <property type="project" value="GO_Central"/>
</dbReference>
<dbReference type="GO" id="GO:0046933">
    <property type="term" value="F:proton-transporting ATP synthase activity, rotational mechanism"/>
    <property type="evidence" value="ECO:0007669"/>
    <property type="project" value="UniProtKB-UniRule"/>
</dbReference>
<dbReference type="GO" id="GO:0015986">
    <property type="term" value="P:proton motive force-driven ATP synthesis"/>
    <property type="evidence" value="ECO:0000318"/>
    <property type="project" value="GO_Central"/>
</dbReference>
<dbReference type="CDD" id="cd18113">
    <property type="entry name" value="ATP-synt_F1_alpha_C"/>
    <property type="match status" value="1"/>
</dbReference>
<dbReference type="CDD" id="cd18116">
    <property type="entry name" value="ATP-synt_F1_alpha_N"/>
    <property type="match status" value="1"/>
</dbReference>
<dbReference type="CDD" id="cd01132">
    <property type="entry name" value="F1-ATPase_alpha_CD"/>
    <property type="match status" value="1"/>
</dbReference>
<dbReference type="FunFam" id="1.20.150.20:FF:000001">
    <property type="entry name" value="ATP synthase subunit alpha"/>
    <property type="match status" value="1"/>
</dbReference>
<dbReference type="FunFam" id="2.40.30.20:FF:000001">
    <property type="entry name" value="ATP synthase subunit alpha"/>
    <property type="match status" value="1"/>
</dbReference>
<dbReference type="FunFam" id="3.40.50.300:FF:000002">
    <property type="entry name" value="ATP synthase subunit alpha"/>
    <property type="match status" value="1"/>
</dbReference>
<dbReference type="Gene3D" id="2.40.30.20">
    <property type="match status" value="1"/>
</dbReference>
<dbReference type="Gene3D" id="1.20.150.20">
    <property type="entry name" value="ATP synthase alpha/beta chain, C-terminal domain"/>
    <property type="match status" value="1"/>
</dbReference>
<dbReference type="Gene3D" id="3.40.50.300">
    <property type="entry name" value="P-loop containing nucleotide triphosphate hydrolases"/>
    <property type="match status" value="1"/>
</dbReference>
<dbReference type="HAMAP" id="MF_01346">
    <property type="entry name" value="ATP_synth_alpha_bact"/>
    <property type="match status" value="1"/>
</dbReference>
<dbReference type="InterPro" id="IPR023366">
    <property type="entry name" value="ATP_synth_asu-like_sf"/>
</dbReference>
<dbReference type="InterPro" id="IPR000793">
    <property type="entry name" value="ATP_synth_asu_C"/>
</dbReference>
<dbReference type="InterPro" id="IPR038376">
    <property type="entry name" value="ATP_synth_asu_C_sf"/>
</dbReference>
<dbReference type="InterPro" id="IPR033732">
    <property type="entry name" value="ATP_synth_F1_a_nt-bd_dom"/>
</dbReference>
<dbReference type="InterPro" id="IPR005294">
    <property type="entry name" value="ATP_synth_F1_asu"/>
</dbReference>
<dbReference type="InterPro" id="IPR020003">
    <property type="entry name" value="ATPase_a/bsu_AS"/>
</dbReference>
<dbReference type="InterPro" id="IPR004100">
    <property type="entry name" value="ATPase_F1/V1/A1_a/bsu_N"/>
</dbReference>
<dbReference type="InterPro" id="IPR036121">
    <property type="entry name" value="ATPase_F1/V1/A1_a/bsu_N_sf"/>
</dbReference>
<dbReference type="InterPro" id="IPR000194">
    <property type="entry name" value="ATPase_F1/V1/A1_a/bsu_nucl-bd"/>
</dbReference>
<dbReference type="InterPro" id="IPR027417">
    <property type="entry name" value="P-loop_NTPase"/>
</dbReference>
<dbReference type="NCBIfam" id="TIGR00962">
    <property type="entry name" value="atpA"/>
    <property type="match status" value="1"/>
</dbReference>
<dbReference type="NCBIfam" id="NF009884">
    <property type="entry name" value="PRK13343.1"/>
    <property type="match status" value="1"/>
</dbReference>
<dbReference type="PANTHER" id="PTHR48082:SF6">
    <property type="entry name" value="ATP SYNTHASE SUBUNIT ALPHA, CHLOROPLASTIC"/>
    <property type="match status" value="1"/>
</dbReference>
<dbReference type="PANTHER" id="PTHR48082">
    <property type="entry name" value="ATP SYNTHASE SUBUNIT ALPHA, MITOCHONDRIAL"/>
    <property type="match status" value="1"/>
</dbReference>
<dbReference type="Pfam" id="PF00006">
    <property type="entry name" value="ATP-synt_ab"/>
    <property type="match status" value="1"/>
</dbReference>
<dbReference type="Pfam" id="PF00306">
    <property type="entry name" value="ATP-synt_ab_C"/>
    <property type="match status" value="1"/>
</dbReference>
<dbReference type="Pfam" id="PF02874">
    <property type="entry name" value="ATP-synt_ab_N"/>
    <property type="match status" value="1"/>
</dbReference>
<dbReference type="PIRSF" id="PIRSF039088">
    <property type="entry name" value="F_ATPase_subunit_alpha"/>
    <property type="match status" value="1"/>
</dbReference>
<dbReference type="SUPFAM" id="SSF47917">
    <property type="entry name" value="C-terminal domain of alpha and beta subunits of F1 ATP synthase"/>
    <property type="match status" value="1"/>
</dbReference>
<dbReference type="SUPFAM" id="SSF50615">
    <property type="entry name" value="N-terminal domain of alpha and beta subunits of F1 ATP synthase"/>
    <property type="match status" value="1"/>
</dbReference>
<dbReference type="SUPFAM" id="SSF52540">
    <property type="entry name" value="P-loop containing nucleoside triphosphate hydrolases"/>
    <property type="match status" value="1"/>
</dbReference>
<dbReference type="PROSITE" id="PS00152">
    <property type="entry name" value="ATPASE_ALPHA_BETA"/>
    <property type="match status" value="1"/>
</dbReference>
<name>ATPA_SORBI</name>
<reference key="1">
    <citation type="journal article" date="2007" name="Theor. Appl. Genet.">
        <title>Complete chloroplast genome sequences of Hordeum vulgare, Sorghum bicolor and Agrostis stolonifera, and comparative analyses with other grass genomes.</title>
        <authorList>
            <person name="Saski C."/>
            <person name="Lee S.-B."/>
            <person name="Fjellheim S."/>
            <person name="Guda C."/>
            <person name="Jansen R.K."/>
            <person name="Luo H."/>
            <person name="Tomkins J."/>
            <person name="Rognli O.A."/>
            <person name="Daniell H."/>
            <person name="Clarke J.L."/>
        </authorList>
    </citation>
    <scope>NUCLEOTIDE SEQUENCE [LARGE SCALE GENOMIC DNA]</scope>
    <source>
        <strain>cv. BTx623</strain>
    </source>
</reference>
<organism>
    <name type="scientific">Sorghum bicolor</name>
    <name type="common">Sorghum</name>
    <name type="synonym">Sorghum vulgare</name>
    <dbReference type="NCBI Taxonomy" id="4558"/>
    <lineage>
        <taxon>Eukaryota</taxon>
        <taxon>Viridiplantae</taxon>
        <taxon>Streptophyta</taxon>
        <taxon>Embryophyta</taxon>
        <taxon>Tracheophyta</taxon>
        <taxon>Spermatophyta</taxon>
        <taxon>Magnoliopsida</taxon>
        <taxon>Liliopsida</taxon>
        <taxon>Poales</taxon>
        <taxon>Poaceae</taxon>
        <taxon>PACMAD clade</taxon>
        <taxon>Panicoideae</taxon>
        <taxon>Andropogonodae</taxon>
        <taxon>Andropogoneae</taxon>
        <taxon>Sorghinae</taxon>
        <taxon>Sorghum</taxon>
    </lineage>
</organism>
<sequence>MATLRVDEINKILRERIEQYNRKVGIENIGRVVQVGDGIARIIGLGEIMSGELVEFAEGTRGIALNLESKNVGIVLMGDGLMIQEGSFVKATGRIAQIPVSEAYLGRVINALAKPIDGRGEIVASESRLIESPAPGIISRRSVYEPLQTGLIAIDSMIPIGRGQRELIIGDRQTGKTAVATDTILNQKGQDVICVYVAIGQRASSVAQVVTTFHEEGAMEYTIVVAEMADSPATLQYLAPYTGAALAEYFMYRERHTLIIYDDLSKQAQAYRQMSLLLRRPPGREAYPGDVFYLHSRLLERAAKLNSLLGEGSMTALPIVETQSGDVSAYIPTNVISITDGQIFLSADLFNAGIRPAINVGISVSRVGSAAQIKAMKQVAGKSKLELAQFAELQAFAQFASALDKTSQNQLARGRRLRELLKQSQSNPLPVEEQVATIYTGTRGYLDSLEIEQVKKFLDELRKHLKDTKPQFQEIISSSKTFTEQAETLLKEAIQEQLERFSLQEQT</sequence>
<feature type="chain" id="PRO_0000275173" description="ATP synthase subunit alpha, chloroplastic">
    <location>
        <begin position="1"/>
        <end position="507"/>
    </location>
</feature>
<feature type="binding site" evidence="1">
    <location>
        <begin position="170"/>
        <end position="177"/>
    </location>
    <ligand>
        <name>ATP</name>
        <dbReference type="ChEBI" id="CHEBI:30616"/>
    </ligand>
</feature>
<feature type="site" description="Required for activity" evidence="1">
    <location>
        <position position="363"/>
    </location>
</feature>
<evidence type="ECO:0000255" key="1">
    <source>
        <dbReference type="HAMAP-Rule" id="MF_01346"/>
    </source>
</evidence>
<proteinExistence type="inferred from homology"/>
<gene>
    <name evidence="1" type="primary">atpA</name>
</gene>